<organism>
    <name type="scientific">Xylella fastidiosa (strain M12)</name>
    <dbReference type="NCBI Taxonomy" id="405440"/>
    <lineage>
        <taxon>Bacteria</taxon>
        <taxon>Pseudomonadati</taxon>
        <taxon>Pseudomonadota</taxon>
        <taxon>Gammaproteobacteria</taxon>
        <taxon>Lysobacterales</taxon>
        <taxon>Lysobacteraceae</taxon>
        <taxon>Xylella</taxon>
    </lineage>
</organism>
<reference key="1">
    <citation type="journal article" date="2010" name="J. Bacteriol.">
        <title>Whole genome sequences of two Xylella fastidiosa strains (M12 and M23) causing almond leaf scorch disease in California.</title>
        <authorList>
            <person name="Chen J."/>
            <person name="Xie G."/>
            <person name="Han S."/>
            <person name="Chertkov O."/>
            <person name="Sims D."/>
            <person name="Civerolo E.L."/>
        </authorList>
    </citation>
    <scope>NUCLEOTIDE SEQUENCE [LARGE SCALE GENOMIC DNA]</scope>
    <source>
        <strain>M12</strain>
    </source>
</reference>
<proteinExistence type="inferred from homology"/>
<comment type="function">
    <text evidence="1">Major role in the synthesis of nucleoside triphosphates other than ATP. The ATP gamma phosphate is transferred to the NDP beta phosphate via a ping-pong mechanism, using a phosphorylated active-site intermediate.</text>
</comment>
<comment type="catalytic activity">
    <reaction evidence="1">
        <text>a 2'-deoxyribonucleoside 5'-diphosphate + ATP = a 2'-deoxyribonucleoside 5'-triphosphate + ADP</text>
        <dbReference type="Rhea" id="RHEA:44640"/>
        <dbReference type="ChEBI" id="CHEBI:30616"/>
        <dbReference type="ChEBI" id="CHEBI:61560"/>
        <dbReference type="ChEBI" id="CHEBI:73316"/>
        <dbReference type="ChEBI" id="CHEBI:456216"/>
        <dbReference type="EC" id="2.7.4.6"/>
    </reaction>
</comment>
<comment type="catalytic activity">
    <reaction evidence="1">
        <text>a ribonucleoside 5'-diphosphate + ATP = a ribonucleoside 5'-triphosphate + ADP</text>
        <dbReference type="Rhea" id="RHEA:18113"/>
        <dbReference type="ChEBI" id="CHEBI:30616"/>
        <dbReference type="ChEBI" id="CHEBI:57930"/>
        <dbReference type="ChEBI" id="CHEBI:61557"/>
        <dbReference type="ChEBI" id="CHEBI:456216"/>
        <dbReference type="EC" id="2.7.4.6"/>
    </reaction>
</comment>
<comment type="cofactor">
    <cofactor evidence="1">
        <name>Mg(2+)</name>
        <dbReference type="ChEBI" id="CHEBI:18420"/>
    </cofactor>
</comment>
<comment type="subunit">
    <text evidence="1">Homotetramer.</text>
</comment>
<comment type="subcellular location">
    <subcellularLocation>
        <location evidence="1">Cytoplasm</location>
    </subcellularLocation>
</comment>
<comment type="similarity">
    <text evidence="1">Belongs to the NDK family.</text>
</comment>
<gene>
    <name evidence="1" type="primary">ndk</name>
    <name type="ordered locus">Xfasm12_1781</name>
</gene>
<dbReference type="EC" id="2.7.4.6" evidence="1"/>
<dbReference type="EMBL" id="CP000941">
    <property type="protein sequence ID" value="ACA12674.1"/>
    <property type="molecule type" value="Genomic_DNA"/>
</dbReference>
<dbReference type="RefSeq" id="WP_004083578.1">
    <property type="nucleotide sequence ID" value="NC_010513.1"/>
</dbReference>
<dbReference type="SMR" id="B0U495"/>
<dbReference type="GeneID" id="93905459"/>
<dbReference type="KEGG" id="xfm:Xfasm12_1781"/>
<dbReference type="HOGENOM" id="CLU_060216_8_1_6"/>
<dbReference type="GO" id="GO:0005737">
    <property type="term" value="C:cytoplasm"/>
    <property type="evidence" value="ECO:0007669"/>
    <property type="project" value="UniProtKB-SubCell"/>
</dbReference>
<dbReference type="GO" id="GO:0005524">
    <property type="term" value="F:ATP binding"/>
    <property type="evidence" value="ECO:0007669"/>
    <property type="project" value="UniProtKB-UniRule"/>
</dbReference>
<dbReference type="GO" id="GO:0046872">
    <property type="term" value="F:metal ion binding"/>
    <property type="evidence" value="ECO:0007669"/>
    <property type="project" value="UniProtKB-KW"/>
</dbReference>
<dbReference type="GO" id="GO:0004550">
    <property type="term" value="F:nucleoside diphosphate kinase activity"/>
    <property type="evidence" value="ECO:0007669"/>
    <property type="project" value="UniProtKB-UniRule"/>
</dbReference>
<dbReference type="GO" id="GO:0006241">
    <property type="term" value="P:CTP biosynthetic process"/>
    <property type="evidence" value="ECO:0007669"/>
    <property type="project" value="UniProtKB-UniRule"/>
</dbReference>
<dbReference type="GO" id="GO:0006183">
    <property type="term" value="P:GTP biosynthetic process"/>
    <property type="evidence" value="ECO:0007669"/>
    <property type="project" value="UniProtKB-UniRule"/>
</dbReference>
<dbReference type="GO" id="GO:0006228">
    <property type="term" value="P:UTP biosynthetic process"/>
    <property type="evidence" value="ECO:0007669"/>
    <property type="project" value="UniProtKB-UniRule"/>
</dbReference>
<dbReference type="CDD" id="cd04413">
    <property type="entry name" value="NDPk_I"/>
    <property type="match status" value="1"/>
</dbReference>
<dbReference type="FunFam" id="3.30.70.141:FF:000001">
    <property type="entry name" value="Nucleoside diphosphate kinase"/>
    <property type="match status" value="1"/>
</dbReference>
<dbReference type="Gene3D" id="3.30.70.141">
    <property type="entry name" value="Nucleoside diphosphate kinase-like domain"/>
    <property type="match status" value="1"/>
</dbReference>
<dbReference type="HAMAP" id="MF_00451">
    <property type="entry name" value="NDP_kinase"/>
    <property type="match status" value="1"/>
</dbReference>
<dbReference type="InterPro" id="IPR034907">
    <property type="entry name" value="NDK-like_dom"/>
</dbReference>
<dbReference type="InterPro" id="IPR036850">
    <property type="entry name" value="NDK-like_dom_sf"/>
</dbReference>
<dbReference type="InterPro" id="IPR001564">
    <property type="entry name" value="Nucleoside_diP_kinase"/>
</dbReference>
<dbReference type="InterPro" id="IPR023005">
    <property type="entry name" value="Nucleoside_diP_kinase_AS"/>
</dbReference>
<dbReference type="NCBIfam" id="NF001908">
    <property type="entry name" value="PRK00668.1"/>
    <property type="match status" value="1"/>
</dbReference>
<dbReference type="PANTHER" id="PTHR11349">
    <property type="entry name" value="NUCLEOSIDE DIPHOSPHATE KINASE"/>
    <property type="match status" value="1"/>
</dbReference>
<dbReference type="Pfam" id="PF00334">
    <property type="entry name" value="NDK"/>
    <property type="match status" value="1"/>
</dbReference>
<dbReference type="PRINTS" id="PR01243">
    <property type="entry name" value="NUCDPKINASE"/>
</dbReference>
<dbReference type="SMART" id="SM00562">
    <property type="entry name" value="NDK"/>
    <property type="match status" value="1"/>
</dbReference>
<dbReference type="SUPFAM" id="SSF54919">
    <property type="entry name" value="Nucleoside diphosphate kinase, NDK"/>
    <property type="match status" value="1"/>
</dbReference>
<dbReference type="PROSITE" id="PS00469">
    <property type="entry name" value="NDPK"/>
    <property type="match status" value="1"/>
</dbReference>
<dbReference type="PROSITE" id="PS51374">
    <property type="entry name" value="NDPK_LIKE"/>
    <property type="match status" value="1"/>
</dbReference>
<keyword id="KW-0067">ATP-binding</keyword>
<keyword id="KW-0963">Cytoplasm</keyword>
<keyword id="KW-0418">Kinase</keyword>
<keyword id="KW-0460">Magnesium</keyword>
<keyword id="KW-0479">Metal-binding</keyword>
<keyword id="KW-0546">Nucleotide metabolism</keyword>
<keyword id="KW-0547">Nucleotide-binding</keyword>
<keyword id="KW-0597">Phosphoprotein</keyword>
<keyword id="KW-0808">Transferase</keyword>
<name>NDK_XYLFM</name>
<evidence type="ECO:0000255" key="1">
    <source>
        <dbReference type="HAMAP-Rule" id="MF_00451"/>
    </source>
</evidence>
<protein>
    <recommendedName>
        <fullName evidence="1">Nucleoside diphosphate kinase</fullName>
        <shortName evidence="1">NDK</shortName>
        <shortName evidence="1">NDP kinase</shortName>
        <ecNumber evidence="1">2.7.4.6</ecNumber>
    </recommendedName>
    <alternativeName>
        <fullName evidence="1">Nucleoside-2-P kinase</fullName>
    </alternativeName>
</protein>
<accession>B0U495</accession>
<sequence>MVLERTLSIIKPDAVAKNVIGDIYSRFEKAGLKIVAAKYKQLSRREAEGFYAVHRDRPFFNALVEFMISGPVMIQVLESENAVARHRELLGATNPKDAAPGTIRADFAESIEANAAHGSDSVENAAIEVAYFFAATEIILR</sequence>
<feature type="chain" id="PRO_1000125033" description="Nucleoside diphosphate kinase">
    <location>
        <begin position="1"/>
        <end position="141"/>
    </location>
</feature>
<feature type="active site" description="Pros-phosphohistidine intermediate" evidence="1">
    <location>
        <position position="117"/>
    </location>
</feature>
<feature type="binding site" evidence="1">
    <location>
        <position position="11"/>
    </location>
    <ligand>
        <name>ATP</name>
        <dbReference type="ChEBI" id="CHEBI:30616"/>
    </ligand>
</feature>
<feature type="binding site" evidence="1">
    <location>
        <position position="59"/>
    </location>
    <ligand>
        <name>ATP</name>
        <dbReference type="ChEBI" id="CHEBI:30616"/>
    </ligand>
</feature>
<feature type="binding site" evidence="1">
    <location>
        <position position="87"/>
    </location>
    <ligand>
        <name>ATP</name>
        <dbReference type="ChEBI" id="CHEBI:30616"/>
    </ligand>
</feature>
<feature type="binding site" evidence="1">
    <location>
        <position position="93"/>
    </location>
    <ligand>
        <name>ATP</name>
        <dbReference type="ChEBI" id="CHEBI:30616"/>
    </ligand>
</feature>
<feature type="binding site" evidence="1">
    <location>
        <position position="104"/>
    </location>
    <ligand>
        <name>ATP</name>
        <dbReference type="ChEBI" id="CHEBI:30616"/>
    </ligand>
</feature>
<feature type="binding site" evidence="1">
    <location>
        <position position="114"/>
    </location>
    <ligand>
        <name>ATP</name>
        <dbReference type="ChEBI" id="CHEBI:30616"/>
    </ligand>
</feature>